<name>GREA_ROSCS</name>
<organism>
    <name type="scientific">Roseiflexus castenholzii (strain DSM 13941 / HLO8)</name>
    <dbReference type="NCBI Taxonomy" id="383372"/>
    <lineage>
        <taxon>Bacteria</taxon>
        <taxon>Bacillati</taxon>
        <taxon>Chloroflexota</taxon>
        <taxon>Chloroflexia</taxon>
        <taxon>Chloroflexales</taxon>
        <taxon>Roseiflexineae</taxon>
        <taxon>Roseiflexaceae</taxon>
        <taxon>Roseiflexus</taxon>
    </lineage>
</organism>
<feature type="chain" id="PRO_1000094195" description="Transcription elongation factor GreA">
    <location>
        <begin position="1"/>
        <end position="157"/>
    </location>
</feature>
<feature type="coiled-coil region" evidence="1">
    <location>
        <begin position="13"/>
        <end position="75"/>
    </location>
</feature>
<proteinExistence type="inferred from homology"/>
<keyword id="KW-0175">Coiled coil</keyword>
<keyword id="KW-0238">DNA-binding</keyword>
<keyword id="KW-1185">Reference proteome</keyword>
<keyword id="KW-0804">Transcription</keyword>
<keyword id="KW-0805">Transcription regulation</keyword>
<comment type="function">
    <text evidence="1">Necessary for efficient RNA polymerase transcription elongation past template-encoded arresting sites. The arresting sites in DNA have the property of trapping a certain fraction of elongating RNA polymerases that pass through, resulting in locked ternary complexes. Cleavage of the nascent transcript by cleavage factors such as GreA or GreB allows the resumption of elongation from the new 3'terminus. GreA releases sequences of 2 to 3 nucleotides.</text>
</comment>
<comment type="similarity">
    <text evidence="1">Belongs to the GreA/GreB family.</text>
</comment>
<accession>A7NFC5</accession>
<dbReference type="EMBL" id="CP000804">
    <property type="protein sequence ID" value="ABU56147.1"/>
    <property type="molecule type" value="Genomic_DNA"/>
</dbReference>
<dbReference type="RefSeq" id="WP_011997553.1">
    <property type="nucleotide sequence ID" value="NC_009767.1"/>
</dbReference>
<dbReference type="SMR" id="A7NFC5"/>
<dbReference type="STRING" id="383372.Rcas_0008"/>
<dbReference type="KEGG" id="rca:Rcas_0008"/>
<dbReference type="eggNOG" id="COG0782">
    <property type="taxonomic scope" value="Bacteria"/>
</dbReference>
<dbReference type="HOGENOM" id="CLU_101379_2_1_0"/>
<dbReference type="OrthoDB" id="9808774at2"/>
<dbReference type="Proteomes" id="UP000000263">
    <property type="component" value="Chromosome"/>
</dbReference>
<dbReference type="GO" id="GO:0003677">
    <property type="term" value="F:DNA binding"/>
    <property type="evidence" value="ECO:0007669"/>
    <property type="project" value="UniProtKB-UniRule"/>
</dbReference>
<dbReference type="GO" id="GO:0070063">
    <property type="term" value="F:RNA polymerase binding"/>
    <property type="evidence" value="ECO:0007669"/>
    <property type="project" value="InterPro"/>
</dbReference>
<dbReference type="GO" id="GO:0006354">
    <property type="term" value="P:DNA-templated transcription elongation"/>
    <property type="evidence" value="ECO:0007669"/>
    <property type="project" value="TreeGrafter"/>
</dbReference>
<dbReference type="GO" id="GO:0032784">
    <property type="term" value="P:regulation of DNA-templated transcription elongation"/>
    <property type="evidence" value="ECO:0007669"/>
    <property type="project" value="UniProtKB-UniRule"/>
</dbReference>
<dbReference type="FunFam" id="1.10.287.180:FF:000001">
    <property type="entry name" value="Transcription elongation factor GreA"/>
    <property type="match status" value="1"/>
</dbReference>
<dbReference type="FunFam" id="3.10.50.30:FF:000001">
    <property type="entry name" value="Transcription elongation factor GreA"/>
    <property type="match status" value="1"/>
</dbReference>
<dbReference type="Gene3D" id="3.10.50.30">
    <property type="entry name" value="Transcription elongation factor, GreA/GreB, C-terminal domain"/>
    <property type="match status" value="1"/>
</dbReference>
<dbReference type="Gene3D" id="1.10.287.180">
    <property type="entry name" value="Transcription elongation factor, GreA/GreB, N-terminal domain"/>
    <property type="match status" value="1"/>
</dbReference>
<dbReference type="HAMAP" id="MF_00105">
    <property type="entry name" value="GreA_GreB"/>
    <property type="match status" value="1"/>
</dbReference>
<dbReference type="InterPro" id="IPR036953">
    <property type="entry name" value="GreA/GreB_C_sf"/>
</dbReference>
<dbReference type="InterPro" id="IPR006359">
    <property type="entry name" value="Tscrpt_elong_fac_GreA"/>
</dbReference>
<dbReference type="InterPro" id="IPR028624">
    <property type="entry name" value="Tscrpt_elong_fac_GreA/B"/>
</dbReference>
<dbReference type="InterPro" id="IPR001437">
    <property type="entry name" value="Tscrpt_elong_fac_GreA/B_C"/>
</dbReference>
<dbReference type="InterPro" id="IPR023459">
    <property type="entry name" value="Tscrpt_elong_fac_GreA/B_fam"/>
</dbReference>
<dbReference type="InterPro" id="IPR022691">
    <property type="entry name" value="Tscrpt_elong_fac_GreA/B_N"/>
</dbReference>
<dbReference type="InterPro" id="IPR036805">
    <property type="entry name" value="Tscrpt_elong_fac_GreA/B_N_sf"/>
</dbReference>
<dbReference type="NCBIfam" id="TIGR01462">
    <property type="entry name" value="greA"/>
    <property type="match status" value="1"/>
</dbReference>
<dbReference type="NCBIfam" id="NF001263">
    <property type="entry name" value="PRK00226.1-4"/>
    <property type="match status" value="1"/>
</dbReference>
<dbReference type="PANTHER" id="PTHR30437">
    <property type="entry name" value="TRANSCRIPTION ELONGATION FACTOR GREA"/>
    <property type="match status" value="1"/>
</dbReference>
<dbReference type="PANTHER" id="PTHR30437:SF4">
    <property type="entry name" value="TRANSCRIPTION ELONGATION FACTOR GREA"/>
    <property type="match status" value="1"/>
</dbReference>
<dbReference type="Pfam" id="PF01272">
    <property type="entry name" value="GreA_GreB"/>
    <property type="match status" value="1"/>
</dbReference>
<dbReference type="Pfam" id="PF03449">
    <property type="entry name" value="GreA_GreB_N"/>
    <property type="match status" value="1"/>
</dbReference>
<dbReference type="PIRSF" id="PIRSF006092">
    <property type="entry name" value="GreA_GreB"/>
    <property type="match status" value="1"/>
</dbReference>
<dbReference type="SUPFAM" id="SSF54534">
    <property type="entry name" value="FKBP-like"/>
    <property type="match status" value="1"/>
</dbReference>
<dbReference type="SUPFAM" id="SSF46557">
    <property type="entry name" value="GreA transcript cleavage protein, N-terminal domain"/>
    <property type="match status" value="1"/>
</dbReference>
<evidence type="ECO:0000255" key="1">
    <source>
        <dbReference type="HAMAP-Rule" id="MF_00105"/>
    </source>
</evidence>
<protein>
    <recommendedName>
        <fullName evidence="1">Transcription elongation factor GreA</fullName>
    </recommendedName>
    <alternativeName>
        <fullName evidence="1">Transcript cleavage factor GreA</fullName>
    </alternativeName>
</protein>
<reference key="1">
    <citation type="submission" date="2007-08" db="EMBL/GenBank/DDBJ databases">
        <title>Complete sequence of Roseiflexus castenholzii DSM 13941.</title>
        <authorList>
            <consortium name="US DOE Joint Genome Institute"/>
            <person name="Copeland A."/>
            <person name="Lucas S."/>
            <person name="Lapidus A."/>
            <person name="Barry K."/>
            <person name="Glavina del Rio T."/>
            <person name="Dalin E."/>
            <person name="Tice H."/>
            <person name="Pitluck S."/>
            <person name="Thompson L.S."/>
            <person name="Brettin T."/>
            <person name="Bruce D."/>
            <person name="Detter J.C."/>
            <person name="Han C."/>
            <person name="Tapia R."/>
            <person name="Schmutz J."/>
            <person name="Larimer F."/>
            <person name="Land M."/>
            <person name="Hauser L."/>
            <person name="Kyrpides N."/>
            <person name="Mikhailova N."/>
            <person name="Bryant D.A."/>
            <person name="Hanada S."/>
            <person name="Tsukatani Y."/>
            <person name="Richardson P."/>
        </authorList>
    </citation>
    <scope>NUCLEOTIDE SEQUENCE [LARGE SCALE GENOMIC DNA]</scope>
    <source>
        <strain>DSM 13941 / HLO8</strain>
    </source>
</reference>
<gene>
    <name evidence="1" type="primary">greA</name>
    <name type="ordered locus">Rcas_0008</name>
</gene>
<sequence>MSDKPAYLTRDGRARLEAELEELVTKGRKEIAERINAAKELGDISESGEYEDAKNQQAHLEGRIREIKSILARAQIIDEENGSNHEVRIGSRVTVRIDGEHEEETWTIVGSTEAKPSEGKISNESPIGAALLGKRPSQQVTVETPSGTMKLTILNIQ</sequence>